<dbReference type="EMBL" id="U33331">
    <property type="protein sequence ID" value="AAA85883.1"/>
    <property type="molecule type" value="Genomic_DNA"/>
</dbReference>
<dbReference type="EMBL" id="GU937742">
    <property type="protein sequence ID" value="AAR31515.1"/>
    <property type="molecule type" value="Genomic_DNA"/>
</dbReference>
<dbReference type="SMR" id="Q68396"/>
<dbReference type="Proteomes" id="UP000008455">
    <property type="component" value="Segment"/>
</dbReference>
<dbReference type="GO" id="GO:0016020">
    <property type="term" value="C:membrane"/>
    <property type="evidence" value="ECO:0007669"/>
    <property type="project" value="UniProtKB-SubCell"/>
</dbReference>
<dbReference type="GO" id="GO:0050829">
    <property type="term" value="P:defense response to Gram-negative bacterium"/>
    <property type="evidence" value="ECO:0007669"/>
    <property type="project" value="TreeGrafter"/>
</dbReference>
<dbReference type="GO" id="GO:0050830">
    <property type="term" value="P:defense response to Gram-positive bacterium"/>
    <property type="evidence" value="ECO:0007669"/>
    <property type="project" value="TreeGrafter"/>
</dbReference>
<dbReference type="GO" id="GO:0046642">
    <property type="term" value="P:negative regulation of alpha-beta T cell proliferation"/>
    <property type="evidence" value="ECO:0007669"/>
    <property type="project" value="TreeGrafter"/>
</dbReference>
<dbReference type="GO" id="GO:0002720">
    <property type="term" value="P:positive regulation of cytokine production involved in immune response"/>
    <property type="evidence" value="ECO:0007669"/>
    <property type="project" value="TreeGrafter"/>
</dbReference>
<dbReference type="GO" id="GO:2000406">
    <property type="term" value="P:positive regulation of T cell migration"/>
    <property type="evidence" value="ECO:0007669"/>
    <property type="project" value="TreeGrafter"/>
</dbReference>
<dbReference type="GO" id="GO:0085033">
    <property type="term" value="P:symbiont-mediated activation of host NF-kappaB cascade"/>
    <property type="evidence" value="ECO:0007669"/>
    <property type="project" value="UniProtKB-KW"/>
</dbReference>
<dbReference type="CDD" id="cd10582">
    <property type="entry name" value="TNFRSF14"/>
    <property type="match status" value="1"/>
</dbReference>
<dbReference type="Gene3D" id="2.10.50.10">
    <property type="entry name" value="Tumor Necrosis Factor Receptor, subunit A, domain 2"/>
    <property type="match status" value="2"/>
</dbReference>
<dbReference type="InterPro" id="IPR001368">
    <property type="entry name" value="TNFR/NGFR_Cys_rich_reg"/>
</dbReference>
<dbReference type="InterPro" id="IPR034031">
    <property type="entry name" value="TNFRSF14/UL144_N"/>
</dbReference>
<dbReference type="PANTHER" id="PTHR46838">
    <property type="entry name" value="TUMOR NECROSIS FACTOR RECEPTOR SUPERFAMILY MEMBER 14"/>
    <property type="match status" value="1"/>
</dbReference>
<dbReference type="PANTHER" id="PTHR46838:SF1">
    <property type="entry name" value="TUMOR NECROSIS FACTOR RECEPTOR SUPERFAMILY MEMBER 14"/>
    <property type="match status" value="1"/>
</dbReference>
<dbReference type="Pfam" id="PF00020">
    <property type="entry name" value="TNFR_c6"/>
    <property type="match status" value="1"/>
</dbReference>
<dbReference type="SMART" id="SM00208">
    <property type="entry name" value="TNFR"/>
    <property type="match status" value="2"/>
</dbReference>
<dbReference type="SUPFAM" id="SSF57586">
    <property type="entry name" value="TNF receptor-like"/>
    <property type="match status" value="2"/>
</dbReference>
<dbReference type="PROSITE" id="PS00652">
    <property type="entry name" value="TNFR_NGFR_1"/>
    <property type="match status" value="1"/>
</dbReference>
<dbReference type="PROSITE" id="PS50050">
    <property type="entry name" value="TNFR_NGFR_2"/>
    <property type="match status" value="1"/>
</dbReference>
<comment type="function">
    <text evidence="3">Activates NF-kappaB in a tumor necrosis factor receptor (TNFR)-associated factor 6 (TRAF6)-dependent manner, causing the up-regulation of the chemokine CCL22.</text>
</comment>
<comment type="subunit">
    <text evidence="4">Interacts with host TRIM23; this interaction causes auto-ubiquitination of TRAF6, leading to NF-kappaB activation.</text>
</comment>
<comment type="subcellular location">
    <subcellularLocation>
        <location evidence="5">Membrane</location>
        <topology evidence="5">Single-pass membrane protein</topology>
    </subcellularLocation>
</comment>
<gene>
    <name type="primary">UL144</name>
</gene>
<keyword id="KW-1074">Activation of host NF-kappa-B by virus</keyword>
<keyword id="KW-1015">Disulfide bond</keyword>
<keyword id="KW-0945">Host-virus interaction</keyword>
<keyword id="KW-0472">Membrane</keyword>
<keyword id="KW-0677">Repeat</keyword>
<keyword id="KW-0732">Signal</keyword>
<keyword id="KW-0812">Transmembrane</keyword>
<keyword id="KW-1133">Transmembrane helix</keyword>
<sequence length="176" mass="19624">MKPLIMLICFAVILLQLGVTKVCQHNEVQLGNECCPPCGSGQRVTKVCTDYTSVTCTPCPNGTYVSGLYNCTDCTQCNVTQVMIRNCTSTNNTVCAPKNHTYFSTPGVQHHKQRQQNHTAHITVKQGKSGRHTLAWLSLFIFLVGIILLILYLIAAYRSERCQQCCSIGKIFYRTL</sequence>
<feature type="signal peptide" evidence="1">
    <location>
        <begin position="1"/>
        <end position="20"/>
    </location>
</feature>
<feature type="chain" id="PRO_0000410894" description="Membrane glycoprotein UL144">
    <location>
        <begin position="21"/>
        <end position="176"/>
    </location>
</feature>
<feature type="transmembrane region" description="Helical" evidence="1">
    <location>
        <begin position="134"/>
        <end position="154"/>
    </location>
</feature>
<feature type="repeat" description="TNFR-Cys 1">
    <location>
        <begin position="22"/>
        <end position="56"/>
    </location>
</feature>
<feature type="repeat" description="TNFR-Cys 2">
    <location>
        <begin position="58"/>
        <end position="95"/>
    </location>
</feature>
<feature type="disulfide bond" evidence="2">
    <location>
        <begin position="23"/>
        <end position="34"/>
    </location>
</feature>
<feature type="disulfide bond" evidence="2">
    <location>
        <begin position="35"/>
        <end position="48"/>
    </location>
</feature>
<feature type="disulfide bond" evidence="2">
    <location>
        <begin position="38"/>
        <end position="56"/>
    </location>
</feature>
<feature type="disulfide bond" evidence="2">
    <location>
        <begin position="59"/>
        <end position="71"/>
    </location>
</feature>
<feature type="disulfide bond" evidence="2">
    <location>
        <begin position="74"/>
        <end position="87"/>
    </location>
</feature>
<feature type="disulfide bond" evidence="2">
    <location>
        <begin position="77"/>
        <end position="95"/>
    </location>
</feature>
<evidence type="ECO:0000255" key="1"/>
<evidence type="ECO:0000255" key="2">
    <source>
        <dbReference type="PROSITE-ProRule" id="PRU00206"/>
    </source>
</evidence>
<evidence type="ECO:0000269" key="3">
    <source>
    </source>
</evidence>
<evidence type="ECO:0000269" key="4">
    <source>
    </source>
</evidence>
<evidence type="ECO:0000305" key="5"/>
<accession>Q68396</accession>
<organismHost>
    <name type="scientific">Homo sapiens</name>
    <name type="common">Human</name>
    <dbReference type="NCBI Taxonomy" id="9606"/>
</organismHost>
<reference key="1">
    <citation type="journal article" date="1996" name="J. Virol.">
        <title>Human cytomegalovirus clinical isolates carry at least 19 genes not found in laboratory strains.</title>
        <authorList>
            <person name="Cha T.A."/>
            <person name="Tom E."/>
            <person name="Kemble G.W."/>
            <person name="Duke G.M."/>
            <person name="Mocarski E.S."/>
            <person name="Spaete R.R."/>
        </authorList>
    </citation>
    <scope>NUCLEOTIDE SEQUENCE [GENOMIC DNA]</scope>
</reference>
<reference key="2">
    <citation type="submission" date="2010-02" db="EMBL/GenBank/DDBJ databases">
        <authorList>
            <person name="Davison A.J."/>
        </authorList>
    </citation>
    <scope>NUCLEOTIDE SEQUENCE [GENOMIC DNA]</scope>
</reference>
<reference key="3">
    <citation type="journal article" date="2006" name="EMBO J.">
        <title>The UL144 gene product of human cytomegalovirus activates NFkappaB via a TRAF6-dependent mechanism.</title>
        <authorList>
            <person name="Poole E."/>
            <person name="King C.A."/>
            <person name="Sinclair J.H."/>
            <person name="Alcami A."/>
        </authorList>
    </citation>
    <scope>FUNCTION</scope>
</reference>
<reference key="4">
    <citation type="journal article" date="2009" name="J. Virol.">
        <title>Identification of TRIM23 as a cofactor involved in the regulation of NF-kappaB by human cytomegalovirus.</title>
        <authorList>
            <person name="Poole E."/>
            <person name="Groves I."/>
            <person name="MacDonald A."/>
            <person name="Pang Y."/>
            <person name="Alcami A."/>
            <person name="Sinclair J."/>
        </authorList>
    </citation>
    <scope>INTERACTION WITH HUMAN TRIM23</scope>
</reference>
<protein>
    <recommendedName>
        <fullName>Membrane glycoprotein UL144</fullName>
    </recommendedName>
    <alternativeName>
        <fullName>TNF alpha-like receptor UL144</fullName>
    </alternativeName>
    <alternativeName>
        <fullName>UL144 protein</fullName>
    </alternativeName>
</protein>
<proteinExistence type="evidence at protein level"/>
<organism>
    <name type="scientific">Human cytomegalovirus (strain Toledo)</name>
    <name type="common">HHV-5</name>
    <name type="synonym">Human herpesvirus 5</name>
    <dbReference type="NCBI Taxonomy" id="311339"/>
    <lineage>
        <taxon>Viruses</taxon>
        <taxon>Duplodnaviria</taxon>
        <taxon>Heunggongvirae</taxon>
        <taxon>Peploviricota</taxon>
        <taxon>Herviviricetes</taxon>
        <taxon>Herpesvirales</taxon>
        <taxon>Orthoherpesviridae</taxon>
        <taxon>Betaherpesvirinae</taxon>
        <taxon>Cytomegalovirus</taxon>
        <taxon>Cytomegalovirus humanbeta5</taxon>
        <taxon>Human cytomegalovirus</taxon>
    </lineage>
</organism>
<name>UL144_HCMVO</name>